<accession>Q2KV05</accession>
<comment type="function">
    <text evidence="1">Catalyzes the NADPH-dependent reduction of N-acetyl-5-glutamyl phosphate to yield N-acetyl-L-glutamate 5-semialdehyde.</text>
</comment>
<comment type="catalytic activity">
    <reaction evidence="1">
        <text>N-acetyl-L-glutamate 5-semialdehyde + phosphate + NADP(+) = N-acetyl-L-glutamyl 5-phosphate + NADPH + H(+)</text>
        <dbReference type="Rhea" id="RHEA:21588"/>
        <dbReference type="ChEBI" id="CHEBI:15378"/>
        <dbReference type="ChEBI" id="CHEBI:29123"/>
        <dbReference type="ChEBI" id="CHEBI:43474"/>
        <dbReference type="ChEBI" id="CHEBI:57783"/>
        <dbReference type="ChEBI" id="CHEBI:57936"/>
        <dbReference type="ChEBI" id="CHEBI:58349"/>
        <dbReference type="EC" id="1.2.1.38"/>
    </reaction>
</comment>
<comment type="pathway">
    <text evidence="1">Amino-acid biosynthesis; L-arginine biosynthesis; N(2)-acetyl-L-ornithine from L-glutamate: step 3/4.</text>
</comment>
<comment type="subcellular location">
    <subcellularLocation>
        <location evidence="1">Cytoplasm</location>
    </subcellularLocation>
</comment>
<comment type="similarity">
    <text evidence="1">Belongs to the NAGSA dehydrogenase family. Type 1 subfamily.</text>
</comment>
<feature type="chain" id="PRO_1000010980" description="N-acetyl-gamma-glutamyl-phosphate reductase">
    <location>
        <begin position="1"/>
        <end position="353"/>
    </location>
</feature>
<feature type="active site" evidence="1">
    <location>
        <position position="157"/>
    </location>
</feature>
<organism>
    <name type="scientific">Bordetella avium (strain 197N)</name>
    <dbReference type="NCBI Taxonomy" id="360910"/>
    <lineage>
        <taxon>Bacteria</taxon>
        <taxon>Pseudomonadati</taxon>
        <taxon>Pseudomonadota</taxon>
        <taxon>Betaproteobacteria</taxon>
        <taxon>Burkholderiales</taxon>
        <taxon>Alcaligenaceae</taxon>
        <taxon>Bordetella</taxon>
    </lineage>
</organism>
<sequence>MAQARNSRIKVGIVGGTGYTGVELLRLLSQHPDVELTAITSRKEDGLPVAEMYPNLRGHVKLAFSAPEKASLTDCDVVFFATPHGVAMAQAQALTAAGTRVIDLAADFRLQDTASFERWYKMPHGCPDILAKQSAYGLVELNRAAIAQAQVIGNPGCYPTTVILGLAPLLERKLIDTQALIADCKSGVSGAGRKAEVASLFSEASDNFKAYGVAGHRHHPEITEQLEKLAGGKVGLTFVPHLVPMIRGMFSTIYARILPEARETDFQALFEERYAGEAFIDVMPAGSLPETRSVRASNNLRIAVQRPGNGDQLIVLVVQDNLVKGAAGQAVQNMNLMFGLPETTGLNQVAILP</sequence>
<reference key="1">
    <citation type="journal article" date="2006" name="J. Bacteriol.">
        <title>Comparison of the genome sequence of the poultry pathogen Bordetella avium with those of B. bronchiseptica, B. pertussis, and B. parapertussis reveals extensive diversity in surface structures associated with host interaction.</title>
        <authorList>
            <person name="Sebaihia M."/>
            <person name="Preston A."/>
            <person name="Maskell D.J."/>
            <person name="Kuzmiak H."/>
            <person name="Connell T.D."/>
            <person name="King N.D."/>
            <person name="Orndorff P.E."/>
            <person name="Miyamoto D.M."/>
            <person name="Thomson N.R."/>
            <person name="Harris D."/>
            <person name="Goble A."/>
            <person name="Lord A."/>
            <person name="Murphy L."/>
            <person name="Quail M.A."/>
            <person name="Rutter S."/>
            <person name="Squares R."/>
            <person name="Squares S."/>
            <person name="Woodward J."/>
            <person name="Parkhill J."/>
            <person name="Temple L.M."/>
        </authorList>
    </citation>
    <scope>NUCLEOTIDE SEQUENCE [LARGE SCALE GENOMIC DNA]</scope>
    <source>
        <strain>197N</strain>
    </source>
</reference>
<gene>
    <name evidence="1" type="primary">argC</name>
    <name type="ordered locus">BAV2968</name>
</gene>
<name>ARGC_BORA1</name>
<evidence type="ECO:0000255" key="1">
    <source>
        <dbReference type="HAMAP-Rule" id="MF_00150"/>
    </source>
</evidence>
<keyword id="KW-0028">Amino-acid biosynthesis</keyword>
<keyword id="KW-0055">Arginine biosynthesis</keyword>
<keyword id="KW-0963">Cytoplasm</keyword>
<keyword id="KW-0521">NADP</keyword>
<keyword id="KW-0560">Oxidoreductase</keyword>
<keyword id="KW-1185">Reference proteome</keyword>
<proteinExistence type="inferred from homology"/>
<dbReference type="EC" id="1.2.1.38" evidence="1"/>
<dbReference type="EMBL" id="AM167904">
    <property type="protein sequence ID" value="CAJ50578.1"/>
    <property type="molecule type" value="Genomic_DNA"/>
</dbReference>
<dbReference type="RefSeq" id="WP_012418607.1">
    <property type="nucleotide sequence ID" value="NC_010645.1"/>
</dbReference>
<dbReference type="SMR" id="Q2KV05"/>
<dbReference type="STRING" id="360910.BAV2968"/>
<dbReference type="GeneID" id="92933774"/>
<dbReference type="KEGG" id="bav:BAV2968"/>
<dbReference type="eggNOG" id="COG0002">
    <property type="taxonomic scope" value="Bacteria"/>
</dbReference>
<dbReference type="HOGENOM" id="CLU_006384_0_1_4"/>
<dbReference type="OrthoDB" id="9801289at2"/>
<dbReference type="UniPathway" id="UPA00068">
    <property type="reaction ID" value="UER00108"/>
</dbReference>
<dbReference type="Proteomes" id="UP000001977">
    <property type="component" value="Chromosome"/>
</dbReference>
<dbReference type="GO" id="GO:0005737">
    <property type="term" value="C:cytoplasm"/>
    <property type="evidence" value="ECO:0007669"/>
    <property type="project" value="UniProtKB-SubCell"/>
</dbReference>
<dbReference type="GO" id="GO:0003942">
    <property type="term" value="F:N-acetyl-gamma-glutamyl-phosphate reductase activity"/>
    <property type="evidence" value="ECO:0007669"/>
    <property type="project" value="UniProtKB-UniRule"/>
</dbReference>
<dbReference type="GO" id="GO:0051287">
    <property type="term" value="F:NAD binding"/>
    <property type="evidence" value="ECO:0007669"/>
    <property type="project" value="InterPro"/>
</dbReference>
<dbReference type="GO" id="GO:0070401">
    <property type="term" value="F:NADP+ binding"/>
    <property type="evidence" value="ECO:0007669"/>
    <property type="project" value="InterPro"/>
</dbReference>
<dbReference type="GO" id="GO:0006526">
    <property type="term" value="P:L-arginine biosynthetic process"/>
    <property type="evidence" value="ECO:0007669"/>
    <property type="project" value="UniProtKB-UniRule"/>
</dbReference>
<dbReference type="CDD" id="cd23934">
    <property type="entry name" value="AGPR_1_C"/>
    <property type="match status" value="1"/>
</dbReference>
<dbReference type="CDD" id="cd17895">
    <property type="entry name" value="AGPR_1_N"/>
    <property type="match status" value="1"/>
</dbReference>
<dbReference type="FunFam" id="3.30.360.10:FF:000014">
    <property type="entry name" value="N-acetyl-gamma-glutamyl-phosphate reductase"/>
    <property type="match status" value="1"/>
</dbReference>
<dbReference type="Gene3D" id="3.30.360.10">
    <property type="entry name" value="Dihydrodipicolinate Reductase, domain 2"/>
    <property type="match status" value="1"/>
</dbReference>
<dbReference type="Gene3D" id="3.40.50.720">
    <property type="entry name" value="NAD(P)-binding Rossmann-like Domain"/>
    <property type="match status" value="1"/>
</dbReference>
<dbReference type="HAMAP" id="MF_00150">
    <property type="entry name" value="ArgC_type1"/>
    <property type="match status" value="1"/>
</dbReference>
<dbReference type="InterPro" id="IPR023013">
    <property type="entry name" value="AGPR_AS"/>
</dbReference>
<dbReference type="InterPro" id="IPR000706">
    <property type="entry name" value="AGPR_type-1"/>
</dbReference>
<dbReference type="InterPro" id="IPR036291">
    <property type="entry name" value="NAD(P)-bd_dom_sf"/>
</dbReference>
<dbReference type="InterPro" id="IPR050085">
    <property type="entry name" value="NAGSA_dehydrogenase"/>
</dbReference>
<dbReference type="InterPro" id="IPR000534">
    <property type="entry name" value="Semialdehyde_DH_NAD-bd"/>
</dbReference>
<dbReference type="NCBIfam" id="TIGR01850">
    <property type="entry name" value="argC"/>
    <property type="match status" value="1"/>
</dbReference>
<dbReference type="PANTHER" id="PTHR32338:SF10">
    <property type="entry name" value="N-ACETYL-GAMMA-GLUTAMYL-PHOSPHATE REDUCTASE, CHLOROPLASTIC-RELATED"/>
    <property type="match status" value="1"/>
</dbReference>
<dbReference type="PANTHER" id="PTHR32338">
    <property type="entry name" value="N-ACETYL-GAMMA-GLUTAMYL-PHOSPHATE REDUCTASE, CHLOROPLASTIC-RELATED-RELATED"/>
    <property type="match status" value="1"/>
</dbReference>
<dbReference type="Pfam" id="PF01118">
    <property type="entry name" value="Semialdhyde_dh"/>
    <property type="match status" value="1"/>
</dbReference>
<dbReference type="Pfam" id="PF22698">
    <property type="entry name" value="Semialdhyde_dhC_1"/>
    <property type="match status" value="1"/>
</dbReference>
<dbReference type="SMART" id="SM00859">
    <property type="entry name" value="Semialdhyde_dh"/>
    <property type="match status" value="1"/>
</dbReference>
<dbReference type="SUPFAM" id="SSF55347">
    <property type="entry name" value="Glyceraldehyde-3-phosphate dehydrogenase-like, C-terminal domain"/>
    <property type="match status" value="1"/>
</dbReference>
<dbReference type="SUPFAM" id="SSF51735">
    <property type="entry name" value="NAD(P)-binding Rossmann-fold domains"/>
    <property type="match status" value="1"/>
</dbReference>
<dbReference type="PROSITE" id="PS01224">
    <property type="entry name" value="ARGC"/>
    <property type="match status" value="1"/>
</dbReference>
<protein>
    <recommendedName>
        <fullName evidence="1">N-acetyl-gamma-glutamyl-phosphate reductase</fullName>
        <shortName evidence="1">AGPR</shortName>
        <ecNumber evidence="1">1.2.1.38</ecNumber>
    </recommendedName>
    <alternativeName>
        <fullName evidence="1">N-acetyl-glutamate semialdehyde dehydrogenase</fullName>
        <shortName evidence="1">NAGSA dehydrogenase</shortName>
    </alternativeName>
</protein>